<sequence>MSVSAFIRITRPHNAVVAGLTALIGYLIATGTLTPPSLLLAVIVALITAGGNVINDVRDVEIDRINRPDRPIPAGDISLAGARAYAAALFVGGIAIATLTTTLCLAIAIINSVILIVYAVRLKRTPVLGNVAVAYLAGSVFLFGGAFAGIEGLVRNLSLAAITFLATIARELLKDAEDVDGDAAGGARTLPMIVGVRKTGIFAFACACGAVAASLLPFGDWWGLFYLAGIAVVDLVILFGAFRGLSCTTPGCVRESNATSILRAGMFAALAVFAIAAVI</sequence>
<protein>
    <recommendedName>
        <fullName evidence="1">Digeranylgeranylglyceryl phosphate synthase</fullName>
        <shortName evidence="1">DGGGP synthase</shortName>
        <shortName evidence="1">DGGGPS</shortName>
        <ecNumber evidence="1">2.5.1.42</ecNumber>
    </recommendedName>
    <alternativeName>
        <fullName evidence="1">(S)-2,3-di-O-geranylgeranylglyceryl phosphate synthase</fullName>
    </alternativeName>
    <alternativeName>
        <fullName evidence="1">Geranylgeranylglycerol-phosphate geranylgeranyltransferase</fullName>
    </alternativeName>
</protein>
<comment type="function">
    <text evidence="1">Prenyltransferase that catalyzes the transfer of the geranylgeranyl moiety of geranylgeranyl diphosphate (GGPP) to the C2 hydroxyl of (S)-3-O-geranylgeranylglyceryl phosphate (GGGP). This reaction is the second ether-bond-formation step in the biosynthesis of archaeal membrane lipids.</text>
</comment>
<comment type="catalytic activity">
    <reaction evidence="1">
        <text>sn-3-O-(geranylgeranyl)glycerol 1-phosphate + (2E,6E,10E)-geranylgeranyl diphosphate = 2,3-bis-O-(geranylgeranyl)-sn-glycerol 1-phosphate + diphosphate</text>
        <dbReference type="Rhea" id="RHEA:18109"/>
        <dbReference type="ChEBI" id="CHEBI:33019"/>
        <dbReference type="ChEBI" id="CHEBI:57677"/>
        <dbReference type="ChEBI" id="CHEBI:58756"/>
        <dbReference type="ChEBI" id="CHEBI:58837"/>
        <dbReference type="EC" id="2.5.1.42"/>
    </reaction>
</comment>
<comment type="cofactor">
    <cofactor evidence="1">
        <name>Mg(2+)</name>
        <dbReference type="ChEBI" id="CHEBI:18420"/>
    </cofactor>
</comment>
<comment type="pathway">
    <text evidence="1">Membrane lipid metabolism; glycerophospholipid metabolism.</text>
</comment>
<comment type="subcellular location">
    <subcellularLocation>
        <location evidence="1">Cell membrane</location>
        <topology evidence="1">Multi-pass membrane protein</topology>
    </subcellularLocation>
</comment>
<comment type="similarity">
    <text evidence="1">Belongs to the UbiA prenyltransferase family. DGGGP synthase subfamily.</text>
</comment>
<keyword id="KW-1003">Cell membrane</keyword>
<keyword id="KW-0444">Lipid biosynthesis</keyword>
<keyword id="KW-0443">Lipid metabolism</keyword>
<keyword id="KW-0460">Magnesium</keyword>
<keyword id="KW-0472">Membrane</keyword>
<keyword id="KW-0594">Phospholipid biosynthesis</keyword>
<keyword id="KW-1208">Phospholipid metabolism</keyword>
<keyword id="KW-0808">Transferase</keyword>
<keyword id="KW-0812">Transmembrane</keyword>
<keyword id="KW-1133">Transmembrane helix</keyword>
<gene>
    <name type="ordered locus">Memar_1697</name>
</gene>
<reference key="1">
    <citation type="journal article" date="2009" name="Stand. Genomic Sci.">
        <title>Complete genome sequence of Methanoculleus marisnigri Romesser et al. 1981 type strain JR1.</title>
        <authorList>
            <person name="Anderson I.J."/>
            <person name="Sieprawska-Lupa M."/>
            <person name="Lapidus A."/>
            <person name="Nolan M."/>
            <person name="Copeland A."/>
            <person name="Glavina Del Rio T."/>
            <person name="Tice H."/>
            <person name="Dalin E."/>
            <person name="Barry K."/>
            <person name="Saunders E."/>
            <person name="Han C."/>
            <person name="Brettin T."/>
            <person name="Detter J.C."/>
            <person name="Bruce D."/>
            <person name="Mikhailova N."/>
            <person name="Pitluck S."/>
            <person name="Hauser L."/>
            <person name="Land M."/>
            <person name="Lucas S."/>
            <person name="Richardson P."/>
            <person name="Whitman W.B."/>
            <person name="Kyrpides N.C."/>
        </authorList>
    </citation>
    <scope>NUCLEOTIDE SEQUENCE [LARGE SCALE GENOMIC DNA]</scope>
    <source>
        <strain>ATCC 35101 / DSM 1498 / JR1</strain>
    </source>
</reference>
<dbReference type="EC" id="2.5.1.42" evidence="1"/>
<dbReference type="EMBL" id="CP000562">
    <property type="protein sequence ID" value="ABN57624.1"/>
    <property type="molecule type" value="Genomic_DNA"/>
</dbReference>
<dbReference type="RefSeq" id="WP_011844535.1">
    <property type="nucleotide sequence ID" value="NC_009051.1"/>
</dbReference>
<dbReference type="SMR" id="A3CW74"/>
<dbReference type="STRING" id="368407.Memar_1697"/>
<dbReference type="GeneID" id="4846522"/>
<dbReference type="KEGG" id="mem:Memar_1697"/>
<dbReference type="eggNOG" id="arCOG00476">
    <property type="taxonomic scope" value="Archaea"/>
</dbReference>
<dbReference type="HOGENOM" id="CLU_073311_1_1_2"/>
<dbReference type="OrthoDB" id="11851at2157"/>
<dbReference type="UniPathway" id="UPA00940"/>
<dbReference type="Proteomes" id="UP000002146">
    <property type="component" value="Chromosome"/>
</dbReference>
<dbReference type="GO" id="GO:0005886">
    <property type="term" value="C:plasma membrane"/>
    <property type="evidence" value="ECO:0007669"/>
    <property type="project" value="UniProtKB-SubCell"/>
</dbReference>
<dbReference type="GO" id="GO:0047295">
    <property type="term" value="F:geranylgeranylglycerol-phosphate geranylgeranyltransferase activity"/>
    <property type="evidence" value="ECO:0007669"/>
    <property type="project" value="UniProtKB-UniRule"/>
</dbReference>
<dbReference type="GO" id="GO:0000287">
    <property type="term" value="F:magnesium ion binding"/>
    <property type="evidence" value="ECO:0007669"/>
    <property type="project" value="UniProtKB-UniRule"/>
</dbReference>
<dbReference type="GO" id="GO:0046474">
    <property type="term" value="P:glycerophospholipid biosynthetic process"/>
    <property type="evidence" value="ECO:0007669"/>
    <property type="project" value="UniProtKB-UniRule"/>
</dbReference>
<dbReference type="CDD" id="cd13961">
    <property type="entry name" value="PT_UbiA_DGGGPS"/>
    <property type="match status" value="1"/>
</dbReference>
<dbReference type="Gene3D" id="1.10.357.140">
    <property type="entry name" value="UbiA prenyltransferase"/>
    <property type="match status" value="1"/>
</dbReference>
<dbReference type="HAMAP" id="MF_01286">
    <property type="entry name" value="DGGGP_synth"/>
    <property type="match status" value="1"/>
</dbReference>
<dbReference type="InterPro" id="IPR023547">
    <property type="entry name" value="DGGGP_synth"/>
</dbReference>
<dbReference type="InterPro" id="IPR050475">
    <property type="entry name" value="Prenyltransferase_related"/>
</dbReference>
<dbReference type="InterPro" id="IPR000537">
    <property type="entry name" value="UbiA_prenyltransferase"/>
</dbReference>
<dbReference type="InterPro" id="IPR044878">
    <property type="entry name" value="UbiA_sf"/>
</dbReference>
<dbReference type="NCBIfam" id="NF009521">
    <property type="entry name" value="PRK12882.1"/>
    <property type="match status" value="1"/>
</dbReference>
<dbReference type="PANTHER" id="PTHR42723">
    <property type="entry name" value="CHLOROPHYLL SYNTHASE"/>
    <property type="match status" value="1"/>
</dbReference>
<dbReference type="PANTHER" id="PTHR42723:SF1">
    <property type="entry name" value="CHLOROPHYLL SYNTHASE, CHLOROPLASTIC"/>
    <property type="match status" value="1"/>
</dbReference>
<dbReference type="Pfam" id="PF01040">
    <property type="entry name" value="UbiA"/>
    <property type="match status" value="1"/>
</dbReference>
<accession>A3CW74</accession>
<evidence type="ECO:0000255" key="1">
    <source>
        <dbReference type="HAMAP-Rule" id="MF_01286"/>
    </source>
</evidence>
<name>DGGGP_METMJ</name>
<organism>
    <name type="scientific">Methanoculleus marisnigri (strain ATCC 35101 / DSM 1498 / JR1)</name>
    <dbReference type="NCBI Taxonomy" id="368407"/>
    <lineage>
        <taxon>Archaea</taxon>
        <taxon>Methanobacteriati</taxon>
        <taxon>Methanobacteriota</taxon>
        <taxon>Stenosarchaea group</taxon>
        <taxon>Methanomicrobia</taxon>
        <taxon>Methanomicrobiales</taxon>
        <taxon>Methanomicrobiaceae</taxon>
        <taxon>Methanoculleus</taxon>
    </lineage>
</organism>
<feature type="chain" id="PRO_5000223967" description="Digeranylgeranylglyceryl phosphate synthase">
    <location>
        <begin position="1"/>
        <end position="279"/>
    </location>
</feature>
<feature type="transmembrane region" description="Helical" evidence="1">
    <location>
        <begin position="27"/>
        <end position="47"/>
    </location>
</feature>
<feature type="transmembrane region" description="Helical" evidence="1">
    <location>
        <begin position="90"/>
        <end position="110"/>
    </location>
</feature>
<feature type="transmembrane region" description="Helical" evidence="1">
    <location>
        <begin position="127"/>
        <end position="147"/>
    </location>
</feature>
<feature type="transmembrane region" description="Helical" evidence="1">
    <location>
        <begin position="199"/>
        <end position="219"/>
    </location>
</feature>
<feature type="transmembrane region" description="Helical" evidence="1">
    <location>
        <begin position="222"/>
        <end position="242"/>
    </location>
</feature>
<feature type="transmembrane region" description="Helical" evidence="1">
    <location>
        <begin position="259"/>
        <end position="279"/>
    </location>
</feature>
<proteinExistence type="inferred from homology"/>